<name>ARGB_CLAM3</name>
<proteinExistence type="inferred from homology"/>
<keyword id="KW-0028">Amino-acid biosynthesis</keyword>
<keyword id="KW-0055">Arginine biosynthesis</keyword>
<keyword id="KW-0067">ATP-binding</keyword>
<keyword id="KW-0963">Cytoplasm</keyword>
<keyword id="KW-0418">Kinase</keyword>
<keyword id="KW-0547">Nucleotide-binding</keyword>
<keyword id="KW-0808">Transferase</keyword>
<organism>
    <name type="scientific">Clavibacter michiganensis subsp. michiganensis (strain NCPPB 382)</name>
    <dbReference type="NCBI Taxonomy" id="443906"/>
    <lineage>
        <taxon>Bacteria</taxon>
        <taxon>Bacillati</taxon>
        <taxon>Actinomycetota</taxon>
        <taxon>Actinomycetes</taxon>
        <taxon>Micrococcales</taxon>
        <taxon>Microbacteriaceae</taxon>
        <taxon>Clavibacter</taxon>
    </lineage>
</organism>
<gene>
    <name evidence="1" type="primary">argB</name>
    <name type="ordered locus">CMM_1999</name>
</gene>
<evidence type="ECO:0000255" key="1">
    <source>
        <dbReference type="HAMAP-Rule" id="MF_00082"/>
    </source>
</evidence>
<reference key="1">
    <citation type="journal article" date="2008" name="J. Bacteriol.">
        <title>The genome sequence of the tomato-pathogenic actinomycete Clavibacter michiganensis subsp. michiganensis NCPPB382 reveals a large island involved in pathogenicity.</title>
        <authorList>
            <person name="Gartemann K.-H."/>
            <person name="Abt B."/>
            <person name="Bekel T."/>
            <person name="Burger A."/>
            <person name="Engemann J."/>
            <person name="Fluegel M."/>
            <person name="Gaigalat L."/>
            <person name="Goesmann A."/>
            <person name="Graefen I."/>
            <person name="Kalinowski J."/>
            <person name="Kaup O."/>
            <person name="Kirchner O."/>
            <person name="Krause L."/>
            <person name="Linke B."/>
            <person name="McHardy A."/>
            <person name="Meyer F."/>
            <person name="Pohle S."/>
            <person name="Rueckert C."/>
            <person name="Schneiker S."/>
            <person name="Zellermann E.-M."/>
            <person name="Puehler A."/>
            <person name="Eichenlaub R."/>
            <person name="Kaiser O."/>
            <person name="Bartels D."/>
        </authorList>
    </citation>
    <scope>NUCLEOTIDE SEQUENCE [LARGE SCALE GENOMIC DNA]</scope>
    <source>
        <strain>NCPPB 382</strain>
    </source>
</reference>
<accession>A5CSJ6</accession>
<protein>
    <recommendedName>
        <fullName evidence="1">Acetylglutamate kinase</fullName>
        <ecNumber evidence="1">2.7.2.8</ecNumber>
    </recommendedName>
    <alternativeName>
        <fullName evidence="1">N-acetyl-L-glutamate 5-phosphotransferase</fullName>
    </alternativeName>
    <alternativeName>
        <fullName evidence="1">NAG kinase</fullName>
        <shortName evidence="1">NAGK</shortName>
    </alternativeName>
</protein>
<dbReference type="EC" id="2.7.2.8" evidence="1"/>
<dbReference type="EMBL" id="AM711867">
    <property type="protein sequence ID" value="CAN02062.1"/>
    <property type="molecule type" value="Genomic_DNA"/>
</dbReference>
<dbReference type="RefSeq" id="WP_012038686.1">
    <property type="nucleotide sequence ID" value="NC_009480.1"/>
</dbReference>
<dbReference type="SMR" id="A5CSJ6"/>
<dbReference type="GeneID" id="92947992"/>
<dbReference type="KEGG" id="cmi:CMM_1999"/>
<dbReference type="eggNOG" id="COG0548">
    <property type="taxonomic scope" value="Bacteria"/>
</dbReference>
<dbReference type="HOGENOM" id="CLU_053680_0_0_11"/>
<dbReference type="UniPathway" id="UPA00068">
    <property type="reaction ID" value="UER00107"/>
</dbReference>
<dbReference type="Proteomes" id="UP000001564">
    <property type="component" value="Chromosome"/>
</dbReference>
<dbReference type="GO" id="GO:0005737">
    <property type="term" value="C:cytoplasm"/>
    <property type="evidence" value="ECO:0007669"/>
    <property type="project" value="UniProtKB-SubCell"/>
</dbReference>
<dbReference type="GO" id="GO:0003991">
    <property type="term" value="F:acetylglutamate kinase activity"/>
    <property type="evidence" value="ECO:0007669"/>
    <property type="project" value="UniProtKB-UniRule"/>
</dbReference>
<dbReference type="GO" id="GO:0005524">
    <property type="term" value="F:ATP binding"/>
    <property type="evidence" value="ECO:0007669"/>
    <property type="project" value="UniProtKB-UniRule"/>
</dbReference>
<dbReference type="GO" id="GO:0042450">
    <property type="term" value="P:arginine biosynthetic process via ornithine"/>
    <property type="evidence" value="ECO:0007669"/>
    <property type="project" value="UniProtKB-UniRule"/>
</dbReference>
<dbReference type="GO" id="GO:0006526">
    <property type="term" value="P:L-arginine biosynthetic process"/>
    <property type="evidence" value="ECO:0007669"/>
    <property type="project" value="UniProtKB-UniPathway"/>
</dbReference>
<dbReference type="CDD" id="cd04250">
    <property type="entry name" value="AAK_NAGK-C"/>
    <property type="match status" value="1"/>
</dbReference>
<dbReference type="FunFam" id="3.40.1160.10:FF:000004">
    <property type="entry name" value="Acetylglutamate kinase"/>
    <property type="match status" value="1"/>
</dbReference>
<dbReference type="Gene3D" id="3.40.1160.10">
    <property type="entry name" value="Acetylglutamate kinase-like"/>
    <property type="match status" value="1"/>
</dbReference>
<dbReference type="HAMAP" id="MF_00082">
    <property type="entry name" value="ArgB"/>
    <property type="match status" value="1"/>
</dbReference>
<dbReference type="InterPro" id="IPR036393">
    <property type="entry name" value="AceGlu_kinase-like_sf"/>
</dbReference>
<dbReference type="InterPro" id="IPR004662">
    <property type="entry name" value="AcgluKinase_fam"/>
</dbReference>
<dbReference type="InterPro" id="IPR037528">
    <property type="entry name" value="ArgB"/>
</dbReference>
<dbReference type="InterPro" id="IPR001048">
    <property type="entry name" value="Asp/Glu/Uridylate_kinase"/>
</dbReference>
<dbReference type="InterPro" id="IPR001057">
    <property type="entry name" value="Glu/AcGlu_kinase"/>
</dbReference>
<dbReference type="InterPro" id="IPR041727">
    <property type="entry name" value="NAGK-C"/>
</dbReference>
<dbReference type="NCBIfam" id="TIGR00761">
    <property type="entry name" value="argB"/>
    <property type="match status" value="1"/>
</dbReference>
<dbReference type="PANTHER" id="PTHR23342">
    <property type="entry name" value="N-ACETYLGLUTAMATE SYNTHASE"/>
    <property type="match status" value="1"/>
</dbReference>
<dbReference type="PANTHER" id="PTHR23342:SF0">
    <property type="entry name" value="N-ACETYLGLUTAMATE SYNTHASE, MITOCHONDRIAL"/>
    <property type="match status" value="1"/>
</dbReference>
<dbReference type="Pfam" id="PF00696">
    <property type="entry name" value="AA_kinase"/>
    <property type="match status" value="1"/>
</dbReference>
<dbReference type="PIRSF" id="PIRSF000728">
    <property type="entry name" value="NAGK"/>
    <property type="match status" value="1"/>
</dbReference>
<dbReference type="PRINTS" id="PR00474">
    <property type="entry name" value="GLU5KINASE"/>
</dbReference>
<dbReference type="SUPFAM" id="SSF53633">
    <property type="entry name" value="Carbamate kinase-like"/>
    <property type="match status" value="1"/>
</dbReference>
<sequence length="303" mass="31795">MTAITQDAAERDQAQAESKAATLIESLSWLQRFHDRIVVVKFGGNAMVDEELTRTFAEDVVYLRYAGLRPVVVHGGGPQISAMLTRLGIESEFRGGYRVTTPEVLEVVRMVLTGQVSRDVVRGINAHGPLAAAVSGEDAGLFTGRRRGAVVDGVEVDLGLVGDVVAVDPTAVLAQLDAGRIPVVSSIAPDESDPAVSLNVNADAAAAALAVALGAEKLVILTDVAGLYRDWPDRGSLVSDIRSDELRALLPSLESGMIPKMAACLEAVDGGVPKAAIIDGRIPHSMLLEIFTTNGIGTEVVPA</sequence>
<comment type="function">
    <text evidence="1">Catalyzes the ATP-dependent phosphorylation of N-acetyl-L-glutamate.</text>
</comment>
<comment type="catalytic activity">
    <reaction evidence="1">
        <text>N-acetyl-L-glutamate + ATP = N-acetyl-L-glutamyl 5-phosphate + ADP</text>
        <dbReference type="Rhea" id="RHEA:14629"/>
        <dbReference type="ChEBI" id="CHEBI:30616"/>
        <dbReference type="ChEBI" id="CHEBI:44337"/>
        <dbReference type="ChEBI" id="CHEBI:57936"/>
        <dbReference type="ChEBI" id="CHEBI:456216"/>
        <dbReference type="EC" id="2.7.2.8"/>
    </reaction>
</comment>
<comment type="pathway">
    <text evidence="1">Amino-acid biosynthesis; L-arginine biosynthesis; N(2)-acetyl-L-ornithine from L-glutamate: step 2/4.</text>
</comment>
<comment type="subcellular location">
    <subcellularLocation>
        <location evidence="1">Cytoplasm</location>
    </subcellularLocation>
</comment>
<comment type="similarity">
    <text evidence="1">Belongs to the acetylglutamate kinase family. ArgB subfamily.</text>
</comment>
<feature type="chain" id="PRO_0000335619" description="Acetylglutamate kinase">
    <location>
        <begin position="1"/>
        <end position="303"/>
    </location>
</feature>
<feature type="binding site" evidence="1">
    <location>
        <begin position="76"/>
        <end position="77"/>
    </location>
    <ligand>
        <name>substrate</name>
    </ligand>
</feature>
<feature type="binding site" evidence="1">
    <location>
        <position position="98"/>
    </location>
    <ligand>
        <name>substrate</name>
    </ligand>
</feature>
<feature type="binding site" evidence="1">
    <location>
        <position position="199"/>
    </location>
    <ligand>
        <name>substrate</name>
    </ligand>
</feature>
<feature type="site" description="Transition state stabilizer" evidence="1">
    <location>
        <position position="41"/>
    </location>
</feature>
<feature type="site" description="Transition state stabilizer" evidence="1">
    <location>
        <position position="260"/>
    </location>
</feature>